<gene>
    <name evidence="1" type="primary">rplS</name>
    <name type="ordered locus">APL_1789</name>
</gene>
<comment type="function">
    <text evidence="1">This protein is located at the 30S-50S ribosomal subunit interface and may play a role in the structure and function of the aminoacyl-tRNA binding site.</text>
</comment>
<comment type="similarity">
    <text evidence="1">Belongs to the bacterial ribosomal protein bL19 family.</text>
</comment>
<reference key="1">
    <citation type="journal article" date="2008" name="J. Bacteriol.">
        <title>The complete genome sequence of Actinobacillus pleuropneumoniae L20 (serotype 5b).</title>
        <authorList>
            <person name="Foote S.J."/>
            <person name="Bosse J.T."/>
            <person name="Bouevitch A.B."/>
            <person name="Langford P.R."/>
            <person name="Young N.M."/>
            <person name="Nash J.H.E."/>
        </authorList>
    </citation>
    <scope>NUCLEOTIDE SEQUENCE [LARGE SCALE GENOMIC DNA]</scope>
    <source>
        <strain>L20</strain>
    </source>
</reference>
<dbReference type="EMBL" id="CP000569">
    <property type="protein sequence ID" value="ABN74873.1"/>
    <property type="molecule type" value="Genomic_DNA"/>
</dbReference>
<dbReference type="RefSeq" id="WP_005599346.1">
    <property type="nucleotide sequence ID" value="NC_009053.1"/>
</dbReference>
<dbReference type="SMR" id="A3N387"/>
<dbReference type="STRING" id="416269.APL_1789"/>
<dbReference type="EnsemblBacteria" id="ABN74873">
    <property type="protein sequence ID" value="ABN74873"/>
    <property type="gene ID" value="APL_1789"/>
</dbReference>
<dbReference type="GeneID" id="48600082"/>
<dbReference type="KEGG" id="apl:APL_1789"/>
<dbReference type="eggNOG" id="COG0335">
    <property type="taxonomic scope" value="Bacteria"/>
</dbReference>
<dbReference type="HOGENOM" id="CLU_103507_2_2_6"/>
<dbReference type="Proteomes" id="UP000001432">
    <property type="component" value="Chromosome"/>
</dbReference>
<dbReference type="GO" id="GO:0022625">
    <property type="term" value="C:cytosolic large ribosomal subunit"/>
    <property type="evidence" value="ECO:0007669"/>
    <property type="project" value="TreeGrafter"/>
</dbReference>
<dbReference type="GO" id="GO:0003735">
    <property type="term" value="F:structural constituent of ribosome"/>
    <property type="evidence" value="ECO:0007669"/>
    <property type="project" value="InterPro"/>
</dbReference>
<dbReference type="GO" id="GO:0006412">
    <property type="term" value="P:translation"/>
    <property type="evidence" value="ECO:0007669"/>
    <property type="project" value="UniProtKB-UniRule"/>
</dbReference>
<dbReference type="FunFam" id="2.30.30.790:FF:000001">
    <property type="entry name" value="50S ribosomal protein L19"/>
    <property type="match status" value="1"/>
</dbReference>
<dbReference type="Gene3D" id="2.30.30.790">
    <property type="match status" value="1"/>
</dbReference>
<dbReference type="HAMAP" id="MF_00402">
    <property type="entry name" value="Ribosomal_bL19"/>
    <property type="match status" value="1"/>
</dbReference>
<dbReference type="InterPro" id="IPR001857">
    <property type="entry name" value="Ribosomal_bL19"/>
</dbReference>
<dbReference type="InterPro" id="IPR018257">
    <property type="entry name" value="Ribosomal_bL19_CS"/>
</dbReference>
<dbReference type="InterPro" id="IPR038657">
    <property type="entry name" value="Ribosomal_bL19_sf"/>
</dbReference>
<dbReference type="InterPro" id="IPR008991">
    <property type="entry name" value="Translation_prot_SH3-like_sf"/>
</dbReference>
<dbReference type="NCBIfam" id="TIGR01024">
    <property type="entry name" value="rplS_bact"/>
    <property type="match status" value="1"/>
</dbReference>
<dbReference type="PANTHER" id="PTHR15680:SF9">
    <property type="entry name" value="LARGE RIBOSOMAL SUBUNIT PROTEIN BL19M"/>
    <property type="match status" value="1"/>
</dbReference>
<dbReference type="PANTHER" id="PTHR15680">
    <property type="entry name" value="RIBOSOMAL PROTEIN L19"/>
    <property type="match status" value="1"/>
</dbReference>
<dbReference type="Pfam" id="PF01245">
    <property type="entry name" value="Ribosomal_L19"/>
    <property type="match status" value="1"/>
</dbReference>
<dbReference type="PIRSF" id="PIRSF002191">
    <property type="entry name" value="Ribosomal_L19"/>
    <property type="match status" value="1"/>
</dbReference>
<dbReference type="PRINTS" id="PR00061">
    <property type="entry name" value="RIBOSOMALL19"/>
</dbReference>
<dbReference type="SUPFAM" id="SSF50104">
    <property type="entry name" value="Translation proteins SH3-like domain"/>
    <property type="match status" value="1"/>
</dbReference>
<dbReference type="PROSITE" id="PS01015">
    <property type="entry name" value="RIBOSOMAL_L19"/>
    <property type="match status" value="1"/>
</dbReference>
<evidence type="ECO:0000255" key="1">
    <source>
        <dbReference type="HAMAP-Rule" id="MF_00402"/>
    </source>
</evidence>
<evidence type="ECO:0000305" key="2"/>
<keyword id="KW-1185">Reference proteome</keyword>
<keyword id="KW-0687">Ribonucleoprotein</keyword>
<keyword id="KW-0689">Ribosomal protein</keyword>
<feature type="chain" id="PRO_1000049628" description="Large ribosomal subunit protein bL19">
    <location>
        <begin position="1"/>
        <end position="116"/>
    </location>
</feature>
<proteinExistence type="inferred from homology"/>
<accession>A3N387</accession>
<organism>
    <name type="scientific">Actinobacillus pleuropneumoniae serotype 5b (strain L20)</name>
    <dbReference type="NCBI Taxonomy" id="416269"/>
    <lineage>
        <taxon>Bacteria</taxon>
        <taxon>Pseudomonadati</taxon>
        <taxon>Pseudomonadota</taxon>
        <taxon>Gammaproteobacteria</taxon>
        <taxon>Pasteurellales</taxon>
        <taxon>Pasteurellaceae</taxon>
        <taxon>Actinobacillus</taxon>
    </lineage>
</organism>
<protein>
    <recommendedName>
        <fullName evidence="1">Large ribosomal subunit protein bL19</fullName>
    </recommendedName>
    <alternativeName>
        <fullName evidence="2">50S ribosomal protein L19</fullName>
    </alternativeName>
</protein>
<name>RL19_ACTP2</name>
<sequence>MSNIIKQIEQEQLKQNVPSFRPGDTLEVKVWVVEGSKRRLQAFEGVVIAIRNRGLHSAFTLRKVSNGVGVERVFQTHSPVVDSISVKRKGAVRKAKLYYLRERSGKSARIKERLGE</sequence>